<comment type="function">
    <text evidence="1">Acts as a chaperone.</text>
</comment>
<comment type="induction">
    <text evidence="1">By stress conditions e.g. heat shock.</text>
</comment>
<comment type="similarity">
    <text evidence="1">Belongs to the heat shock protein 70 family.</text>
</comment>
<evidence type="ECO:0000255" key="1">
    <source>
        <dbReference type="HAMAP-Rule" id="MF_00332"/>
    </source>
</evidence>
<evidence type="ECO:0000256" key="2">
    <source>
        <dbReference type="SAM" id="MobiDB-lite"/>
    </source>
</evidence>
<name>DNAK_SHESR</name>
<reference key="1">
    <citation type="submission" date="2006-08" db="EMBL/GenBank/DDBJ databases">
        <title>Complete sequence of chromosome 1 of Shewanella sp. MR-7.</title>
        <authorList>
            <person name="Copeland A."/>
            <person name="Lucas S."/>
            <person name="Lapidus A."/>
            <person name="Barry K."/>
            <person name="Detter J.C."/>
            <person name="Glavina del Rio T."/>
            <person name="Hammon N."/>
            <person name="Israni S."/>
            <person name="Dalin E."/>
            <person name="Tice H."/>
            <person name="Pitluck S."/>
            <person name="Kiss H."/>
            <person name="Brettin T."/>
            <person name="Bruce D."/>
            <person name="Han C."/>
            <person name="Tapia R."/>
            <person name="Gilna P."/>
            <person name="Schmutz J."/>
            <person name="Larimer F."/>
            <person name="Land M."/>
            <person name="Hauser L."/>
            <person name="Kyrpides N."/>
            <person name="Mikhailova N."/>
            <person name="Nealson K."/>
            <person name="Konstantinidis K."/>
            <person name="Klappenbach J."/>
            <person name="Tiedje J."/>
            <person name="Richardson P."/>
        </authorList>
    </citation>
    <scope>NUCLEOTIDE SEQUENCE [LARGE SCALE GENOMIC DNA]</scope>
    <source>
        <strain>MR-7</strain>
    </source>
</reference>
<accession>Q0HY11</accession>
<protein>
    <recommendedName>
        <fullName evidence="1">Chaperone protein DnaK</fullName>
    </recommendedName>
    <alternativeName>
        <fullName evidence="1">HSP70</fullName>
    </alternativeName>
    <alternativeName>
        <fullName evidence="1">Heat shock 70 kDa protein</fullName>
    </alternativeName>
    <alternativeName>
        <fullName evidence="1">Heat shock protein 70</fullName>
    </alternativeName>
</protein>
<feature type="chain" id="PRO_1000059667" description="Chaperone protein DnaK">
    <location>
        <begin position="1"/>
        <end position="639"/>
    </location>
</feature>
<feature type="region of interest" description="Disordered" evidence="2">
    <location>
        <begin position="603"/>
        <end position="639"/>
    </location>
</feature>
<feature type="compositionally biased region" description="Low complexity" evidence="2">
    <location>
        <begin position="603"/>
        <end position="618"/>
    </location>
</feature>
<feature type="compositionally biased region" description="Acidic residues" evidence="2">
    <location>
        <begin position="625"/>
        <end position="639"/>
    </location>
</feature>
<feature type="modified residue" description="Phosphothreonine; by autocatalysis" evidence="1">
    <location>
        <position position="198"/>
    </location>
</feature>
<proteinExistence type="inferred from homology"/>
<organism>
    <name type="scientific">Shewanella sp. (strain MR-7)</name>
    <dbReference type="NCBI Taxonomy" id="60481"/>
    <lineage>
        <taxon>Bacteria</taxon>
        <taxon>Pseudomonadati</taxon>
        <taxon>Pseudomonadota</taxon>
        <taxon>Gammaproteobacteria</taxon>
        <taxon>Alteromonadales</taxon>
        <taxon>Shewanellaceae</taxon>
        <taxon>Shewanella</taxon>
    </lineage>
</organism>
<keyword id="KW-0067">ATP-binding</keyword>
<keyword id="KW-0143">Chaperone</keyword>
<keyword id="KW-0547">Nucleotide-binding</keyword>
<keyword id="KW-0597">Phosphoprotein</keyword>
<keyword id="KW-0346">Stress response</keyword>
<sequence length="639" mass="68933">MGKIIGIDLGTTNSCVAVLDGGKARVLENAEGDRTTPSIIAYTDDETIVGQPAKRQAVTNPNNTFFAIKRLIGRRFKDDEVQRDVNIMPFKIIQADNGDAWVESRGNKMAPPQVSAEILKKMKKTAEDFLGEEVTEAVITVPAYFNDSQRQATKDAGRIAGLEVKRIINEPTAAALAYGIDKKQGDNIVAVYDLGGGTFDISIIEIDSNDGDQTFEVLATNGDTHLGGEDFDNRLINYLADEFKKEQGLDLRKDPLAMQRLKEAAEKAKIELSSTNQTEVNLPYITADATGPKHLVVKITRAKLESLVEDLIIRTLEPLKVALADADLSVSDINEVILVGGQTRMPKVQEAVSNFFGKEPRKDVNPDEAVAVGAAIQAGVLSGDVKDVLLLDVTPLSLGIETMGSVMTKLIEKNTTIPTKAQQVFSTADDNQSAVTIHVLQGERKQASANKSLGQFNLDGIEPAPRGMPQIEVMFDIDADGILHVSATDKKTGKKQNITIKASSGLSEEEVAQMVRDAEAHAEEDKKFEELVQSRNQADGLVHATKKQVEEAGDALPADDKAKIEAAMSAVEVATKGNDKEAIEKATQELIEASAKLMEIAQAKAQTQGGAQEGAAKQSNATADDVVDAEFEEVKDDKK</sequence>
<gene>
    <name evidence="1" type="primary">dnaK</name>
    <name type="ordered locus">Shewmr7_0995</name>
</gene>
<dbReference type="EMBL" id="CP000444">
    <property type="protein sequence ID" value="ABI41994.1"/>
    <property type="molecule type" value="Genomic_DNA"/>
</dbReference>
<dbReference type="SMR" id="Q0HY11"/>
<dbReference type="KEGG" id="shm:Shewmr7_0995"/>
<dbReference type="HOGENOM" id="CLU_005965_2_1_6"/>
<dbReference type="GO" id="GO:0005524">
    <property type="term" value="F:ATP binding"/>
    <property type="evidence" value="ECO:0007669"/>
    <property type="project" value="UniProtKB-UniRule"/>
</dbReference>
<dbReference type="GO" id="GO:0140662">
    <property type="term" value="F:ATP-dependent protein folding chaperone"/>
    <property type="evidence" value="ECO:0007669"/>
    <property type="project" value="InterPro"/>
</dbReference>
<dbReference type="GO" id="GO:0051082">
    <property type="term" value="F:unfolded protein binding"/>
    <property type="evidence" value="ECO:0007669"/>
    <property type="project" value="InterPro"/>
</dbReference>
<dbReference type="CDD" id="cd10234">
    <property type="entry name" value="ASKHA_NBD_HSP70_DnaK-like"/>
    <property type="match status" value="1"/>
</dbReference>
<dbReference type="FunFam" id="2.60.34.10:FF:000014">
    <property type="entry name" value="Chaperone protein DnaK HSP70"/>
    <property type="match status" value="1"/>
</dbReference>
<dbReference type="FunFam" id="1.20.1270.10:FF:000001">
    <property type="entry name" value="Molecular chaperone DnaK"/>
    <property type="match status" value="1"/>
</dbReference>
<dbReference type="FunFam" id="3.30.420.40:FF:000004">
    <property type="entry name" value="Molecular chaperone DnaK"/>
    <property type="match status" value="1"/>
</dbReference>
<dbReference type="FunFam" id="3.90.640.10:FF:000003">
    <property type="entry name" value="Molecular chaperone DnaK"/>
    <property type="match status" value="1"/>
</dbReference>
<dbReference type="Gene3D" id="1.20.1270.10">
    <property type="match status" value="1"/>
</dbReference>
<dbReference type="Gene3D" id="3.30.420.40">
    <property type="match status" value="2"/>
</dbReference>
<dbReference type="Gene3D" id="3.90.640.10">
    <property type="entry name" value="Actin, Chain A, domain 4"/>
    <property type="match status" value="1"/>
</dbReference>
<dbReference type="Gene3D" id="2.60.34.10">
    <property type="entry name" value="Substrate Binding Domain Of DNAk, Chain A, domain 1"/>
    <property type="match status" value="1"/>
</dbReference>
<dbReference type="HAMAP" id="MF_00332">
    <property type="entry name" value="DnaK"/>
    <property type="match status" value="1"/>
</dbReference>
<dbReference type="InterPro" id="IPR043129">
    <property type="entry name" value="ATPase_NBD"/>
</dbReference>
<dbReference type="InterPro" id="IPR012725">
    <property type="entry name" value="Chaperone_DnaK"/>
</dbReference>
<dbReference type="InterPro" id="IPR018181">
    <property type="entry name" value="Heat_shock_70_CS"/>
</dbReference>
<dbReference type="InterPro" id="IPR029048">
    <property type="entry name" value="HSP70_C_sf"/>
</dbReference>
<dbReference type="InterPro" id="IPR029047">
    <property type="entry name" value="HSP70_peptide-bd_sf"/>
</dbReference>
<dbReference type="InterPro" id="IPR013126">
    <property type="entry name" value="Hsp_70_fam"/>
</dbReference>
<dbReference type="NCBIfam" id="NF001413">
    <property type="entry name" value="PRK00290.1"/>
    <property type="match status" value="1"/>
</dbReference>
<dbReference type="NCBIfam" id="NF003520">
    <property type="entry name" value="PRK05183.1"/>
    <property type="match status" value="1"/>
</dbReference>
<dbReference type="NCBIfam" id="TIGR02350">
    <property type="entry name" value="prok_dnaK"/>
    <property type="match status" value="1"/>
</dbReference>
<dbReference type="PANTHER" id="PTHR19375">
    <property type="entry name" value="HEAT SHOCK PROTEIN 70KDA"/>
    <property type="match status" value="1"/>
</dbReference>
<dbReference type="Pfam" id="PF00012">
    <property type="entry name" value="HSP70"/>
    <property type="match status" value="1"/>
</dbReference>
<dbReference type="PRINTS" id="PR00301">
    <property type="entry name" value="HEATSHOCK70"/>
</dbReference>
<dbReference type="SUPFAM" id="SSF53067">
    <property type="entry name" value="Actin-like ATPase domain"/>
    <property type="match status" value="2"/>
</dbReference>
<dbReference type="SUPFAM" id="SSF100920">
    <property type="entry name" value="Heat shock protein 70kD (HSP70), peptide-binding domain"/>
    <property type="match status" value="1"/>
</dbReference>
<dbReference type="PROSITE" id="PS00297">
    <property type="entry name" value="HSP70_1"/>
    <property type="match status" value="1"/>
</dbReference>
<dbReference type="PROSITE" id="PS00329">
    <property type="entry name" value="HSP70_2"/>
    <property type="match status" value="1"/>
</dbReference>
<dbReference type="PROSITE" id="PS01036">
    <property type="entry name" value="HSP70_3"/>
    <property type="match status" value="1"/>
</dbReference>